<keyword id="KW-0137">Centromere</keyword>
<keyword id="KW-0158">Chromosome</keyword>
<keyword id="KW-0963">Cytoplasm</keyword>
<keyword id="KW-0206">Cytoskeleton</keyword>
<keyword id="KW-0995">Kinetochore</keyword>
<keyword id="KW-0597">Phosphoprotein</keyword>
<keyword id="KW-1185">Reference proteome</keyword>
<gene>
    <name type="primary">DCTN6</name>
</gene>
<dbReference type="EMBL" id="BC118351">
    <property type="protein sequence ID" value="AAI18352.1"/>
    <property type="molecule type" value="mRNA"/>
</dbReference>
<dbReference type="RefSeq" id="NP_001069106.1">
    <property type="nucleotide sequence ID" value="NM_001075638.2"/>
</dbReference>
<dbReference type="SMR" id="Q148G7"/>
<dbReference type="BioGRID" id="170378">
    <property type="interactions" value="1"/>
</dbReference>
<dbReference type="CORUM" id="Q148G7"/>
<dbReference type="FunCoup" id="Q148G7">
    <property type="interactions" value="2073"/>
</dbReference>
<dbReference type="IntAct" id="Q148G7">
    <property type="interactions" value="2"/>
</dbReference>
<dbReference type="STRING" id="9913.ENSBTAP00000000989"/>
<dbReference type="PaxDb" id="9913-ENSBTAP00000000989"/>
<dbReference type="Ensembl" id="ENSBTAT00000000989.4">
    <property type="protein sequence ID" value="ENSBTAP00000000989.3"/>
    <property type="gene ID" value="ENSBTAG00000000744.5"/>
</dbReference>
<dbReference type="GeneID" id="513751"/>
<dbReference type="KEGG" id="bta:513751"/>
<dbReference type="CTD" id="10671"/>
<dbReference type="VEuPathDB" id="HostDB:ENSBTAG00000000744"/>
<dbReference type="VGNC" id="VGNC:27933">
    <property type="gene designation" value="DCTN6"/>
</dbReference>
<dbReference type="eggNOG" id="KOG4042">
    <property type="taxonomic scope" value="Eukaryota"/>
</dbReference>
<dbReference type="GeneTree" id="ENSGT00390000017890"/>
<dbReference type="HOGENOM" id="CLU_085418_1_0_1"/>
<dbReference type="InParanoid" id="Q148G7"/>
<dbReference type="OMA" id="ITMQAET"/>
<dbReference type="OrthoDB" id="2355at2759"/>
<dbReference type="TreeFam" id="TF352888"/>
<dbReference type="Reactome" id="R-BTA-2132295">
    <property type="pathway name" value="MHC class II antigen presentation"/>
</dbReference>
<dbReference type="Reactome" id="R-BTA-3371497">
    <property type="pathway name" value="HSP90 chaperone cycle for steroid hormone receptors (SHR) in the presence of ligand"/>
</dbReference>
<dbReference type="Reactome" id="R-BTA-6807878">
    <property type="pathway name" value="COPI-mediated anterograde transport"/>
</dbReference>
<dbReference type="Reactome" id="R-BTA-6811436">
    <property type="pathway name" value="COPI-independent Golgi-to-ER retrograde traffic"/>
</dbReference>
<dbReference type="Proteomes" id="UP000009136">
    <property type="component" value="Chromosome 27"/>
</dbReference>
<dbReference type="Bgee" id="ENSBTAG00000000744">
    <property type="expression patterns" value="Expressed in occipital lobe and 108 other cell types or tissues"/>
</dbReference>
<dbReference type="GO" id="GO:0005813">
    <property type="term" value="C:centrosome"/>
    <property type="evidence" value="ECO:0007669"/>
    <property type="project" value="Ensembl"/>
</dbReference>
<dbReference type="GO" id="GO:0005737">
    <property type="term" value="C:cytoplasm"/>
    <property type="evidence" value="ECO:0007669"/>
    <property type="project" value="UniProtKB-KW"/>
</dbReference>
<dbReference type="GO" id="GO:0005869">
    <property type="term" value="C:dynactin complex"/>
    <property type="evidence" value="ECO:0000318"/>
    <property type="project" value="GO_Central"/>
</dbReference>
<dbReference type="GO" id="GO:0000776">
    <property type="term" value="C:kinetochore"/>
    <property type="evidence" value="ECO:0007669"/>
    <property type="project" value="UniProtKB-KW"/>
</dbReference>
<dbReference type="GO" id="GO:0070840">
    <property type="term" value="F:dynein complex binding"/>
    <property type="evidence" value="ECO:0000318"/>
    <property type="project" value="GO_Central"/>
</dbReference>
<dbReference type="GO" id="GO:0007052">
    <property type="term" value="P:mitotic spindle organization"/>
    <property type="evidence" value="ECO:0000318"/>
    <property type="project" value="GO_Central"/>
</dbReference>
<dbReference type="CDD" id="cd04646">
    <property type="entry name" value="LbH_Dynactin_6"/>
    <property type="match status" value="1"/>
</dbReference>
<dbReference type="FunFam" id="2.160.10.10:FF:000021">
    <property type="entry name" value="dynactin subunit 6"/>
    <property type="match status" value="1"/>
</dbReference>
<dbReference type="Gene3D" id="2.160.10.10">
    <property type="entry name" value="Hexapeptide repeat proteins"/>
    <property type="match status" value="1"/>
</dbReference>
<dbReference type="InterPro" id="IPR027777">
    <property type="entry name" value="DCTN6"/>
</dbReference>
<dbReference type="InterPro" id="IPR001451">
    <property type="entry name" value="Hexapep"/>
</dbReference>
<dbReference type="InterPro" id="IPR011004">
    <property type="entry name" value="Trimer_LpxA-like_sf"/>
</dbReference>
<dbReference type="PANTHER" id="PTHR13072">
    <property type="entry name" value="DYNACTIN 6"/>
    <property type="match status" value="1"/>
</dbReference>
<dbReference type="PANTHER" id="PTHR13072:SF0">
    <property type="entry name" value="DYNACTIN SUBUNIT 6"/>
    <property type="match status" value="1"/>
</dbReference>
<dbReference type="Pfam" id="PF00132">
    <property type="entry name" value="Hexapep"/>
    <property type="match status" value="1"/>
</dbReference>
<dbReference type="SUPFAM" id="SSF51161">
    <property type="entry name" value="Trimeric LpxA-like enzymes"/>
    <property type="match status" value="1"/>
</dbReference>
<reference key="1">
    <citation type="submission" date="2006-06" db="EMBL/GenBank/DDBJ databases">
        <authorList>
            <consortium name="NIH - Mammalian Gene Collection (MGC) project"/>
        </authorList>
    </citation>
    <scope>NUCLEOTIDE SEQUENCE [LARGE SCALE MRNA]</scope>
    <source>
        <strain>Hereford</strain>
        <tissue>Fetal cerebellum</tissue>
    </source>
</reference>
<proteinExistence type="evidence at transcript level"/>
<comment type="function">
    <text evidence="2">Part of the dynactin complex that activates the molecular motor dynein for ultra-processive transport along microtubules.</text>
</comment>
<comment type="subunit">
    <text evidence="1 2 3">Subunit of dynactin, a multiprotein complex part of a tripartite complex with dynein and a adapter, such as BICDL1, BICD2 or HOOK3. The dynactin complex is built around ACTR1A/ACTB filament and consists of an actin-related filament composed of a shoulder domain, a pointed end and a barbed end. Its length is defined by its flexible shoulder domain. The soulder is composed of 2 DCTN1 subunits, 4 DCTN2 and 2 DCTN3. The 4 DCNT2 (via N-terminus) bind the ACTR1A filament and act as molecular rulers to determine the length. The pointed end is important for binding dynein-dynactin cargo adapters. Consists of 4 subunits: ACTR10, DCNT4, DCTN5 and DCTN6. Within the complex DCTN6 forms a heterodimer with DCTN5 (By similarity). The barbed end is composed of a CAPZA1:CAPZB heterodimers, which binds ACTR1A/ACTB filament and dynactin and stabilizes dynactin (By similarity). Interacts with PLK1 (By similarity). Interacts with N4BP2L1 (By similarity).</text>
</comment>
<comment type="subcellular location">
    <subcellularLocation>
        <location evidence="1">Cytoplasm</location>
        <location evidence="1">Cytoskeleton</location>
    </subcellularLocation>
    <subcellularLocation>
        <location evidence="2">Chromosome</location>
        <location evidence="2">Centromere</location>
        <location evidence="2">Kinetochore</location>
    </subcellularLocation>
</comment>
<comment type="PTM">
    <text evidence="2">Phosphorylation at Thr-186 by CDK1 during mitotic prometaphase creates a binding site for PLK1 that facilitates its recruitment to kinetochores.</text>
</comment>
<comment type="similarity">
    <text evidence="4">Belongs to the dynactin subunits 5/6 family. Dynactin subunit 6 subfamily.</text>
</comment>
<feature type="chain" id="PRO_0000327742" description="Dynactin subunit 6">
    <location>
        <begin position="1"/>
        <end position="190"/>
    </location>
</feature>
<feature type="modified residue" description="Phosphothreonine; by CDK1" evidence="2">
    <location>
        <position position="186"/>
    </location>
</feature>
<accession>Q148G7</accession>
<protein>
    <recommendedName>
        <fullName>Dynactin subunit 6</fullName>
    </recommendedName>
</protein>
<evidence type="ECO:0000250" key="1">
    <source>
        <dbReference type="UniProtKB" id="D0G6S1"/>
    </source>
</evidence>
<evidence type="ECO:0000250" key="2">
    <source>
        <dbReference type="UniProtKB" id="O00399"/>
    </source>
</evidence>
<evidence type="ECO:0000250" key="3">
    <source>
        <dbReference type="UniProtKB" id="Q9WUB4"/>
    </source>
</evidence>
<evidence type="ECO:0000305" key="4"/>
<sequence length="190" mass="20675">MAEKTQKSVKIAPGAVVCVESEIRGDVTIGPRTVIHPKARIIAEAGPIVIGEGNLIEEQALIINAHPDNITPDAEDPEPKPMIIGTNNVFEVGCYCQAMKIGDNNVIESKAYVGRNVILTSGCIIGACCNLNTFEVIPENTVIYGGDCLRRVQTERPQPQTLQLDFLMKILPNYHHLKKTMKGSSTPVKN</sequence>
<name>DCTN6_BOVIN</name>
<organism>
    <name type="scientific">Bos taurus</name>
    <name type="common">Bovine</name>
    <dbReference type="NCBI Taxonomy" id="9913"/>
    <lineage>
        <taxon>Eukaryota</taxon>
        <taxon>Metazoa</taxon>
        <taxon>Chordata</taxon>
        <taxon>Craniata</taxon>
        <taxon>Vertebrata</taxon>
        <taxon>Euteleostomi</taxon>
        <taxon>Mammalia</taxon>
        <taxon>Eutheria</taxon>
        <taxon>Laurasiatheria</taxon>
        <taxon>Artiodactyla</taxon>
        <taxon>Ruminantia</taxon>
        <taxon>Pecora</taxon>
        <taxon>Bovidae</taxon>
        <taxon>Bovinae</taxon>
        <taxon>Bos</taxon>
    </lineage>
</organism>